<dbReference type="EC" id="3.1.26.4" evidence="1"/>
<dbReference type="EMBL" id="CP000792">
    <property type="protein sequence ID" value="ABW74739.1"/>
    <property type="molecule type" value="Genomic_DNA"/>
</dbReference>
<dbReference type="RefSeq" id="WP_021088313.1">
    <property type="nucleotide sequence ID" value="NC_009802.2"/>
</dbReference>
<dbReference type="SMR" id="A8Z6F7"/>
<dbReference type="STRING" id="360104.CCC13826_0793"/>
<dbReference type="KEGG" id="cco:CCC13826_0793"/>
<dbReference type="eggNOG" id="COG0328">
    <property type="taxonomic scope" value="Bacteria"/>
</dbReference>
<dbReference type="HOGENOM" id="CLU_030894_6_2_7"/>
<dbReference type="OrthoDB" id="7845843at2"/>
<dbReference type="Proteomes" id="UP000001121">
    <property type="component" value="Chromosome"/>
</dbReference>
<dbReference type="GO" id="GO:0005737">
    <property type="term" value="C:cytoplasm"/>
    <property type="evidence" value="ECO:0007669"/>
    <property type="project" value="UniProtKB-SubCell"/>
</dbReference>
<dbReference type="GO" id="GO:0000287">
    <property type="term" value="F:magnesium ion binding"/>
    <property type="evidence" value="ECO:0007669"/>
    <property type="project" value="UniProtKB-UniRule"/>
</dbReference>
<dbReference type="GO" id="GO:0003676">
    <property type="term" value="F:nucleic acid binding"/>
    <property type="evidence" value="ECO:0007669"/>
    <property type="project" value="InterPro"/>
</dbReference>
<dbReference type="GO" id="GO:0004523">
    <property type="term" value="F:RNA-DNA hybrid ribonuclease activity"/>
    <property type="evidence" value="ECO:0007669"/>
    <property type="project" value="UniProtKB-UniRule"/>
</dbReference>
<dbReference type="GO" id="GO:0043137">
    <property type="term" value="P:DNA replication, removal of RNA primer"/>
    <property type="evidence" value="ECO:0007669"/>
    <property type="project" value="TreeGrafter"/>
</dbReference>
<dbReference type="CDD" id="cd09278">
    <property type="entry name" value="RNase_HI_prokaryote_like"/>
    <property type="match status" value="1"/>
</dbReference>
<dbReference type="FunFam" id="3.30.420.10:FF:000089">
    <property type="entry name" value="Ribonuclease H"/>
    <property type="match status" value="1"/>
</dbReference>
<dbReference type="Gene3D" id="3.30.420.10">
    <property type="entry name" value="Ribonuclease H-like superfamily/Ribonuclease H"/>
    <property type="match status" value="1"/>
</dbReference>
<dbReference type="HAMAP" id="MF_00042">
    <property type="entry name" value="RNase_H"/>
    <property type="match status" value="1"/>
</dbReference>
<dbReference type="InterPro" id="IPR050092">
    <property type="entry name" value="RNase_H"/>
</dbReference>
<dbReference type="InterPro" id="IPR012337">
    <property type="entry name" value="RNaseH-like_sf"/>
</dbReference>
<dbReference type="InterPro" id="IPR002156">
    <property type="entry name" value="RNaseH_domain"/>
</dbReference>
<dbReference type="InterPro" id="IPR036397">
    <property type="entry name" value="RNaseH_sf"/>
</dbReference>
<dbReference type="InterPro" id="IPR022892">
    <property type="entry name" value="RNaseHI"/>
</dbReference>
<dbReference type="NCBIfam" id="NF001236">
    <property type="entry name" value="PRK00203.1"/>
    <property type="match status" value="1"/>
</dbReference>
<dbReference type="PANTHER" id="PTHR10642">
    <property type="entry name" value="RIBONUCLEASE H1"/>
    <property type="match status" value="1"/>
</dbReference>
<dbReference type="PANTHER" id="PTHR10642:SF26">
    <property type="entry name" value="RIBONUCLEASE H1"/>
    <property type="match status" value="1"/>
</dbReference>
<dbReference type="Pfam" id="PF00075">
    <property type="entry name" value="RNase_H"/>
    <property type="match status" value="1"/>
</dbReference>
<dbReference type="SUPFAM" id="SSF53098">
    <property type="entry name" value="Ribonuclease H-like"/>
    <property type="match status" value="1"/>
</dbReference>
<dbReference type="PROSITE" id="PS50879">
    <property type="entry name" value="RNASE_H_1"/>
    <property type="match status" value="1"/>
</dbReference>
<proteinExistence type="inferred from homology"/>
<sequence>MKIVTLFSDGSCLGNPGAGGWAYILRYNEAQKKASGGEAYTTNNQMELKAAIMGLKALKEPCEVRLFTDSSYVANSINEWLANWQKRNFKNVKNVELWQEYLEISKPHKVVASWVKGHAGHPENEECDQMARNEALKIKDENKI</sequence>
<evidence type="ECO:0000255" key="1">
    <source>
        <dbReference type="HAMAP-Rule" id="MF_00042"/>
    </source>
</evidence>
<evidence type="ECO:0000255" key="2">
    <source>
        <dbReference type="PROSITE-ProRule" id="PRU00408"/>
    </source>
</evidence>
<comment type="function">
    <text evidence="1">Endonuclease that specifically degrades the RNA of RNA-DNA hybrids.</text>
</comment>
<comment type="catalytic activity">
    <reaction evidence="1">
        <text>Endonucleolytic cleavage to 5'-phosphomonoester.</text>
        <dbReference type="EC" id="3.1.26.4"/>
    </reaction>
</comment>
<comment type="cofactor">
    <cofactor evidence="1">
        <name>Mg(2+)</name>
        <dbReference type="ChEBI" id="CHEBI:18420"/>
    </cofactor>
    <text evidence="1">Binds 1 Mg(2+) ion per subunit. May bind a second metal ion at a regulatory site, or after substrate binding.</text>
</comment>
<comment type="subunit">
    <text evidence="1">Monomer.</text>
</comment>
<comment type="subcellular location">
    <subcellularLocation>
        <location evidence="1">Cytoplasm</location>
    </subcellularLocation>
</comment>
<comment type="similarity">
    <text evidence="1">Belongs to the RNase H family.</text>
</comment>
<organism>
    <name type="scientific">Campylobacter concisus (strain 13826)</name>
    <dbReference type="NCBI Taxonomy" id="360104"/>
    <lineage>
        <taxon>Bacteria</taxon>
        <taxon>Pseudomonadati</taxon>
        <taxon>Campylobacterota</taxon>
        <taxon>Epsilonproteobacteria</taxon>
        <taxon>Campylobacterales</taxon>
        <taxon>Campylobacteraceae</taxon>
        <taxon>Campylobacter</taxon>
    </lineage>
</organism>
<protein>
    <recommendedName>
        <fullName evidence="1">Ribonuclease H</fullName>
        <shortName evidence="1">RNase H</shortName>
        <ecNumber evidence="1">3.1.26.4</ecNumber>
    </recommendedName>
</protein>
<name>RNH_CAMC1</name>
<reference key="1">
    <citation type="submission" date="2007-10" db="EMBL/GenBank/DDBJ databases">
        <title>Genome sequence of Campylobacter concisus 13826 isolated from human feces.</title>
        <authorList>
            <person name="Fouts D.E."/>
            <person name="Mongodin E.F."/>
            <person name="Puiu D."/>
            <person name="Sebastian Y."/>
            <person name="Miller W.G."/>
            <person name="Mandrell R.E."/>
            <person name="On S."/>
            <person name="Nelson K.E."/>
        </authorList>
    </citation>
    <scope>NUCLEOTIDE SEQUENCE [LARGE SCALE GENOMIC DNA]</scope>
    <source>
        <strain>13826</strain>
    </source>
</reference>
<feature type="chain" id="PRO_0000332571" description="Ribonuclease H">
    <location>
        <begin position="1"/>
        <end position="144"/>
    </location>
</feature>
<feature type="domain" description="RNase H type-1" evidence="2">
    <location>
        <begin position="1"/>
        <end position="136"/>
    </location>
</feature>
<feature type="binding site" evidence="1">
    <location>
        <position position="9"/>
    </location>
    <ligand>
        <name>Mg(2+)</name>
        <dbReference type="ChEBI" id="CHEBI:18420"/>
        <label>1</label>
    </ligand>
</feature>
<feature type="binding site" evidence="1">
    <location>
        <position position="9"/>
    </location>
    <ligand>
        <name>Mg(2+)</name>
        <dbReference type="ChEBI" id="CHEBI:18420"/>
        <label>2</label>
    </ligand>
</feature>
<feature type="binding site" evidence="1">
    <location>
        <position position="47"/>
    </location>
    <ligand>
        <name>Mg(2+)</name>
        <dbReference type="ChEBI" id="CHEBI:18420"/>
        <label>1</label>
    </ligand>
</feature>
<feature type="binding site" evidence="1">
    <location>
        <position position="69"/>
    </location>
    <ligand>
        <name>Mg(2+)</name>
        <dbReference type="ChEBI" id="CHEBI:18420"/>
        <label>1</label>
    </ligand>
</feature>
<feature type="binding site" evidence="1">
    <location>
        <position position="128"/>
    </location>
    <ligand>
        <name>Mg(2+)</name>
        <dbReference type="ChEBI" id="CHEBI:18420"/>
        <label>2</label>
    </ligand>
</feature>
<keyword id="KW-0963">Cytoplasm</keyword>
<keyword id="KW-0255">Endonuclease</keyword>
<keyword id="KW-0378">Hydrolase</keyword>
<keyword id="KW-0460">Magnesium</keyword>
<keyword id="KW-0479">Metal-binding</keyword>
<keyword id="KW-0540">Nuclease</keyword>
<gene>
    <name evidence="1" type="primary">rnhA</name>
    <name type="ordered locus">Ccon26_03330</name>
    <name type="ORF">CCC13826_0793</name>
</gene>
<accession>A8Z6F7</accession>